<feature type="chain" id="PRO_0000067638" description="Urease accessory protein UreE">
    <location>
        <begin position="1"/>
        <end position="150"/>
    </location>
</feature>
<feature type="sequence conflict" description="In Ref. 1; AAC43565." evidence="2" ref="1">
    <original>D</original>
    <variation>Y</variation>
    <location>
        <position position="14"/>
    </location>
</feature>
<protein>
    <recommendedName>
        <fullName evidence="1">Urease accessory protein UreE</fullName>
    </recommendedName>
</protein>
<gene>
    <name evidence="1" type="primary">ureE</name>
    <name type="ordered locus">Ssal_01898</name>
</gene>
<organism>
    <name type="scientific">Streptococcus salivarius (strain 57.I)</name>
    <dbReference type="NCBI Taxonomy" id="1046629"/>
    <lineage>
        <taxon>Bacteria</taxon>
        <taxon>Bacillati</taxon>
        <taxon>Bacillota</taxon>
        <taxon>Bacilli</taxon>
        <taxon>Lactobacillales</taxon>
        <taxon>Streptococcaceae</taxon>
        <taxon>Streptococcus</taxon>
    </lineage>
</organism>
<proteinExistence type="inferred from homology"/>
<dbReference type="EMBL" id="U35248">
    <property type="protein sequence ID" value="AAC43565.1"/>
    <property type="molecule type" value="Genomic_DNA"/>
</dbReference>
<dbReference type="EMBL" id="CP002888">
    <property type="protein sequence ID" value="AEJ54135.1"/>
    <property type="molecule type" value="Genomic_DNA"/>
</dbReference>
<dbReference type="RefSeq" id="WP_002949549.1">
    <property type="nucleotide sequence ID" value="NC_017594.1"/>
</dbReference>
<dbReference type="SMR" id="Q55055"/>
<dbReference type="GeneID" id="93791473"/>
<dbReference type="KEGG" id="stf:Ssal_01898"/>
<dbReference type="PATRIC" id="fig|1046629.4.peg.1685"/>
<dbReference type="eggNOG" id="COG2371">
    <property type="taxonomic scope" value="Bacteria"/>
</dbReference>
<dbReference type="GO" id="GO:0005737">
    <property type="term" value="C:cytoplasm"/>
    <property type="evidence" value="ECO:0007669"/>
    <property type="project" value="UniProtKB-SubCell"/>
</dbReference>
<dbReference type="GO" id="GO:0016151">
    <property type="term" value="F:nickel cation binding"/>
    <property type="evidence" value="ECO:0007669"/>
    <property type="project" value="UniProtKB-UniRule"/>
</dbReference>
<dbReference type="GO" id="GO:0051082">
    <property type="term" value="F:unfolded protein binding"/>
    <property type="evidence" value="ECO:0007669"/>
    <property type="project" value="UniProtKB-UniRule"/>
</dbReference>
<dbReference type="GO" id="GO:0006457">
    <property type="term" value="P:protein folding"/>
    <property type="evidence" value="ECO:0007669"/>
    <property type="project" value="InterPro"/>
</dbReference>
<dbReference type="GO" id="GO:0065003">
    <property type="term" value="P:protein-containing complex assembly"/>
    <property type="evidence" value="ECO:0007669"/>
    <property type="project" value="InterPro"/>
</dbReference>
<dbReference type="GO" id="GO:0019627">
    <property type="term" value="P:urea metabolic process"/>
    <property type="evidence" value="ECO:0007669"/>
    <property type="project" value="InterPro"/>
</dbReference>
<dbReference type="CDD" id="cd00571">
    <property type="entry name" value="UreE"/>
    <property type="match status" value="1"/>
</dbReference>
<dbReference type="Gene3D" id="2.60.260.20">
    <property type="entry name" value="Urease metallochaperone UreE, N-terminal domain"/>
    <property type="match status" value="1"/>
</dbReference>
<dbReference type="Gene3D" id="3.30.70.790">
    <property type="entry name" value="UreE, C-terminal domain"/>
    <property type="match status" value="1"/>
</dbReference>
<dbReference type="HAMAP" id="MF_00822">
    <property type="entry name" value="UreE"/>
    <property type="match status" value="1"/>
</dbReference>
<dbReference type="InterPro" id="IPR012406">
    <property type="entry name" value="UreE"/>
</dbReference>
<dbReference type="InterPro" id="IPR007864">
    <property type="entry name" value="UreE_C_dom"/>
</dbReference>
<dbReference type="InterPro" id="IPR004029">
    <property type="entry name" value="UreE_N"/>
</dbReference>
<dbReference type="InterPro" id="IPR036118">
    <property type="entry name" value="UreE_N_sf"/>
</dbReference>
<dbReference type="NCBIfam" id="NF009759">
    <property type="entry name" value="PRK13261.2-5"/>
    <property type="match status" value="1"/>
</dbReference>
<dbReference type="Pfam" id="PF05194">
    <property type="entry name" value="UreE_C"/>
    <property type="match status" value="1"/>
</dbReference>
<dbReference type="Pfam" id="PF02814">
    <property type="entry name" value="UreE_N"/>
    <property type="match status" value="1"/>
</dbReference>
<dbReference type="PIRSF" id="PIRSF036402">
    <property type="entry name" value="Ureas_acces_UreE"/>
    <property type="match status" value="1"/>
</dbReference>
<dbReference type="SMART" id="SM00988">
    <property type="entry name" value="UreE_N"/>
    <property type="match status" value="1"/>
</dbReference>
<dbReference type="SUPFAM" id="SSF69737">
    <property type="entry name" value="Urease metallochaperone UreE, C-terminal domain"/>
    <property type="match status" value="1"/>
</dbReference>
<dbReference type="SUPFAM" id="SSF69287">
    <property type="entry name" value="Urease metallochaperone UreE, N-terminal domain"/>
    <property type="match status" value="1"/>
</dbReference>
<sequence>MIFTKVDALVKDIDVDKYHIETVILSSDDLNKKIIRVKSDHGNEFGIRLDKGQKLQNGSAFFIDDHHVLAIGVESQDLIVISPKDMDEMGITAHILGNTHKPIEVKDAKIYLEVDPVVEQVLTQKEIAYTIEEVVLDKPLRHVNLTAHEH</sequence>
<name>UREE_STRE5</name>
<keyword id="KW-0143">Chaperone</keyword>
<keyword id="KW-0963">Cytoplasm</keyword>
<keyword id="KW-0533">Nickel</keyword>
<keyword id="KW-0996">Nickel insertion</keyword>
<accession>Q55055</accession>
<accession>F8HGJ9</accession>
<comment type="function">
    <text evidence="1">Involved in urease metallocenter assembly. Binds nickel. Probably functions as a nickel donor during metallocenter assembly.</text>
</comment>
<comment type="subcellular location">
    <subcellularLocation>
        <location>Cytoplasm</location>
    </subcellularLocation>
</comment>
<comment type="similarity">
    <text evidence="1">Belongs to the UreE family.</text>
</comment>
<evidence type="ECO:0000255" key="1">
    <source>
        <dbReference type="HAMAP-Rule" id="MF_00822"/>
    </source>
</evidence>
<evidence type="ECO:0000305" key="2"/>
<reference key="1">
    <citation type="journal article" date="1996" name="Infect. Immun.">
        <title>Streptococcus salivarius urease: genetic and biochemical characterization and expression in a dental plaque streptococcus.</title>
        <authorList>
            <person name="Chen Y.-Y.M."/>
            <person name="Clancy K.A."/>
            <person name="Burne R.A."/>
        </authorList>
    </citation>
    <scope>NUCLEOTIDE SEQUENCE [GENOMIC DNA]</scope>
    <source>
        <strain>57.I</strain>
    </source>
</reference>
<reference key="2">
    <citation type="journal article" date="2011" name="J. Bacteriol.">
        <title>Complete genome sequence of the ureolytic Streptococcus salivarius strain 57.I.</title>
        <authorList>
            <person name="Geng J."/>
            <person name="Huang S.C."/>
            <person name="Li S."/>
            <person name="Hu S."/>
            <person name="Chen Y.Y."/>
        </authorList>
    </citation>
    <scope>NUCLEOTIDE SEQUENCE [LARGE SCALE GENOMIC DNA]</scope>
    <source>
        <strain>57.I</strain>
    </source>
</reference>